<feature type="chain" id="PRO_1000047870" description="Probable septum site-determining protein MinC">
    <location>
        <begin position="1"/>
        <end position="198"/>
    </location>
</feature>
<name>MINC_THEM4</name>
<dbReference type="EMBL" id="CP000716">
    <property type="protein sequence ID" value="ABR30977.1"/>
    <property type="molecule type" value="Genomic_DNA"/>
</dbReference>
<dbReference type="RefSeq" id="WP_012057336.1">
    <property type="nucleotide sequence ID" value="NC_009616.1"/>
</dbReference>
<dbReference type="SMR" id="A6LM26"/>
<dbReference type="STRING" id="391009.Tmel_1122"/>
<dbReference type="KEGG" id="tme:Tmel_1122"/>
<dbReference type="eggNOG" id="COG0850">
    <property type="taxonomic scope" value="Bacteria"/>
</dbReference>
<dbReference type="HOGENOM" id="CLU_048711_2_1_0"/>
<dbReference type="OrthoDB" id="37128at2"/>
<dbReference type="Proteomes" id="UP000001110">
    <property type="component" value="Chromosome"/>
</dbReference>
<dbReference type="GO" id="GO:0000902">
    <property type="term" value="P:cell morphogenesis"/>
    <property type="evidence" value="ECO:0007669"/>
    <property type="project" value="InterPro"/>
</dbReference>
<dbReference type="GO" id="GO:0000917">
    <property type="term" value="P:division septum assembly"/>
    <property type="evidence" value="ECO:0007669"/>
    <property type="project" value="UniProtKB-KW"/>
</dbReference>
<dbReference type="GO" id="GO:1901891">
    <property type="term" value="P:regulation of cell septum assembly"/>
    <property type="evidence" value="ECO:0007669"/>
    <property type="project" value="InterPro"/>
</dbReference>
<dbReference type="Gene3D" id="2.160.20.70">
    <property type="match status" value="1"/>
</dbReference>
<dbReference type="Gene3D" id="3.30.750.50">
    <property type="entry name" value="Cell-division inhibitor MinC, N-terminal domain"/>
    <property type="match status" value="1"/>
</dbReference>
<dbReference type="HAMAP" id="MF_00267">
    <property type="entry name" value="MinC"/>
    <property type="match status" value="1"/>
</dbReference>
<dbReference type="InterPro" id="IPR016098">
    <property type="entry name" value="CAP/MinC_C"/>
</dbReference>
<dbReference type="InterPro" id="IPR013033">
    <property type="entry name" value="MinC"/>
</dbReference>
<dbReference type="InterPro" id="IPR036145">
    <property type="entry name" value="MinC_C_sf"/>
</dbReference>
<dbReference type="InterPro" id="IPR005526">
    <property type="entry name" value="Septum_form_inhib_MinC_C"/>
</dbReference>
<dbReference type="NCBIfam" id="NF010598">
    <property type="entry name" value="PRK13992.1"/>
    <property type="match status" value="1"/>
</dbReference>
<dbReference type="PANTHER" id="PTHR34108">
    <property type="entry name" value="SEPTUM SITE-DETERMINING PROTEIN MINC"/>
    <property type="match status" value="1"/>
</dbReference>
<dbReference type="PANTHER" id="PTHR34108:SF1">
    <property type="entry name" value="SEPTUM SITE-DETERMINING PROTEIN MINC"/>
    <property type="match status" value="1"/>
</dbReference>
<dbReference type="Pfam" id="PF03775">
    <property type="entry name" value="MinC_C"/>
    <property type="match status" value="1"/>
</dbReference>
<dbReference type="SUPFAM" id="SSF63848">
    <property type="entry name" value="Cell-division inhibitor MinC, C-terminal domain"/>
    <property type="match status" value="1"/>
</dbReference>
<dbReference type="SUPFAM" id="SSF64043">
    <property type="entry name" value="Cell-division inhibitor MinC, N-terminal domain"/>
    <property type="match status" value="1"/>
</dbReference>
<evidence type="ECO:0000255" key="1">
    <source>
        <dbReference type="HAMAP-Rule" id="MF_00267"/>
    </source>
</evidence>
<gene>
    <name evidence="1" type="primary">minC</name>
    <name type="ordered locus">Tmel_1122</name>
</gene>
<reference key="1">
    <citation type="submission" date="2007-05" db="EMBL/GenBank/DDBJ databases">
        <title>Complete sequence of Thermosipho melanesiensis BI429.</title>
        <authorList>
            <consortium name="US DOE Joint Genome Institute"/>
            <person name="Copeland A."/>
            <person name="Lucas S."/>
            <person name="Lapidus A."/>
            <person name="Barry K."/>
            <person name="Glavina del Rio T."/>
            <person name="Dalin E."/>
            <person name="Tice H."/>
            <person name="Pitluck S."/>
            <person name="Chertkov O."/>
            <person name="Brettin T."/>
            <person name="Bruce D."/>
            <person name="Detter J.C."/>
            <person name="Han C."/>
            <person name="Schmutz J."/>
            <person name="Larimer F."/>
            <person name="Land M."/>
            <person name="Hauser L."/>
            <person name="Kyrpides N."/>
            <person name="Mikhailova N."/>
            <person name="Nelson K."/>
            <person name="Gogarten J.P."/>
            <person name="Noll K."/>
            <person name="Richardson P."/>
        </authorList>
    </citation>
    <scope>NUCLEOTIDE SEQUENCE [LARGE SCALE GENOMIC DNA]</scope>
    <source>
        <strain>DSM 12029 / CIP 104789 / BI429</strain>
    </source>
</reference>
<organism>
    <name type="scientific">Thermosipho melanesiensis (strain DSM 12029 / CIP 104789 / BI429)</name>
    <dbReference type="NCBI Taxonomy" id="391009"/>
    <lineage>
        <taxon>Bacteria</taxon>
        <taxon>Thermotogati</taxon>
        <taxon>Thermotogota</taxon>
        <taxon>Thermotogae</taxon>
        <taxon>Thermotogales</taxon>
        <taxon>Fervidobacteriaceae</taxon>
        <taxon>Thermosipho</taxon>
    </lineage>
</organism>
<sequence>MPFDLKAFKSDIVFYIDNYERLEDLLNEIDNKMEKIKHFFNGREKVLLKLENLEEKISDIPKIMAKIKEYRIKIKAIITDEYDEKAPTVRKEKDEEKTVIYLKNLRSGQKISHNGNIILVGNVNAGSEINAGGTVVIFGSCNGIVRAGLKNPHSYILTLSINTPLLQISDVKHQLNKQYNNPVFVYQKGGKLMFKEII</sequence>
<keyword id="KW-0131">Cell cycle</keyword>
<keyword id="KW-0132">Cell division</keyword>
<keyword id="KW-0717">Septation</keyword>
<accession>A6LM26</accession>
<comment type="function">
    <text evidence="1">Cell division inhibitor that blocks the formation of polar Z ring septums. Rapidly oscillates between the poles of the cell to destabilize FtsZ filaments that have formed before they mature into polar Z rings. Prevents FtsZ polymerization.</text>
</comment>
<comment type="subunit">
    <text evidence="1">Interacts with MinD and FtsZ.</text>
</comment>
<comment type="similarity">
    <text evidence="1">Belongs to the MinC family.</text>
</comment>
<proteinExistence type="inferred from homology"/>
<protein>
    <recommendedName>
        <fullName evidence="1">Probable septum site-determining protein MinC</fullName>
    </recommendedName>
</protein>